<proteinExistence type="evidence at protein level"/>
<comment type="function">
    <text evidence="1">Guanine nucleotide exchange factor for ARF6.</text>
</comment>
<comment type="subcellular location">
    <subcellularLocation>
        <location evidence="2">Cell membrane</location>
    </subcellularLocation>
    <subcellularLocation>
        <location evidence="2">Cell projection</location>
        <location evidence="2">Ruffle membrane</location>
    </subcellularLocation>
    <subcellularLocation>
        <location evidence="2">Postsynaptic density</location>
    </subcellularLocation>
    <text evidence="2">In interphase associated with the plasma membrane, in particular with membrane ruffling regions.</text>
</comment>
<comment type="alternative products">
    <event type="alternative splicing"/>
    <isoform>
        <id>Q9NYI0-1</id>
        <name>1</name>
        <sequence type="displayed"/>
    </isoform>
    <isoform>
        <id>Q9NYI0-2</id>
        <name>2</name>
        <sequence type="described" ref="VSP_023029"/>
    </isoform>
    <isoform>
        <id>Q9NYI0-3</id>
        <name>3</name>
        <sequence type="described" ref="VSP_029155 VSP_029156 VSP_023029"/>
    </isoform>
</comment>
<comment type="tissue specificity">
    <text evidence="7">Isoform 2 is expressed in epididymis (at protein level).</text>
</comment>
<comment type="sequence caution" evidence="11">
    <conflict type="erroneous initiation">
        <sequence resource="EMBL-CDS" id="AAF61269"/>
    </conflict>
</comment>
<comment type="sequence caution" evidence="11">
    <conflict type="erroneous initiation">
        <sequence resource="EMBL-CDS" id="AAH75044"/>
    </conflict>
</comment>
<comment type="sequence caution" evidence="11">
    <conflict type="erroneous initiation">
        <sequence resource="EMBL-CDS" id="AAH75045"/>
    </conflict>
</comment>
<comment type="sequence caution" evidence="11">
    <conflict type="erroneous initiation">
        <sequence resource="EMBL-CDS" id="BAA76786"/>
    </conflict>
</comment>
<feature type="chain" id="PRO_0000120205" description="PH and SEC7 domain-containing protein 3">
    <location>
        <begin position="1"/>
        <end position="1048"/>
    </location>
</feature>
<feature type="domain" description="SEC7" evidence="5">
    <location>
        <begin position="534"/>
        <end position="734"/>
    </location>
</feature>
<feature type="domain" description="PH" evidence="4">
    <location>
        <begin position="785"/>
        <end position="898"/>
    </location>
</feature>
<feature type="region of interest" description="Disordered" evidence="6">
    <location>
        <begin position="36"/>
        <end position="57"/>
    </location>
</feature>
<feature type="region of interest" description="Disordered" evidence="6">
    <location>
        <begin position="104"/>
        <end position="126"/>
    </location>
</feature>
<feature type="region of interest" description="Disordered" evidence="6">
    <location>
        <begin position="310"/>
        <end position="342"/>
    </location>
</feature>
<feature type="region of interest" description="Disordered" evidence="6">
    <location>
        <begin position="364"/>
        <end position="383"/>
    </location>
</feature>
<feature type="region of interest" description="Disordered" evidence="6">
    <location>
        <begin position="395"/>
        <end position="434"/>
    </location>
</feature>
<feature type="region of interest" description="Disordered" evidence="6">
    <location>
        <begin position="741"/>
        <end position="769"/>
    </location>
</feature>
<feature type="region of interest" description="Disordered" evidence="6">
    <location>
        <begin position="999"/>
        <end position="1048"/>
    </location>
</feature>
<feature type="coiled-coil region" evidence="3">
    <location>
        <begin position="922"/>
        <end position="952"/>
    </location>
</feature>
<feature type="compositionally biased region" description="Basic and acidic residues" evidence="6">
    <location>
        <begin position="36"/>
        <end position="45"/>
    </location>
</feature>
<feature type="compositionally biased region" description="Basic and acidic residues" evidence="6">
    <location>
        <begin position="311"/>
        <end position="321"/>
    </location>
</feature>
<feature type="compositionally biased region" description="Basic and acidic residues" evidence="6">
    <location>
        <begin position="397"/>
        <end position="423"/>
    </location>
</feature>
<feature type="compositionally biased region" description="Basic and acidic residues" evidence="6">
    <location>
        <begin position="741"/>
        <end position="758"/>
    </location>
</feature>
<feature type="compositionally biased region" description="Polar residues" evidence="6">
    <location>
        <begin position="1011"/>
        <end position="1022"/>
    </location>
</feature>
<feature type="compositionally biased region" description="Basic and acidic residues" evidence="6">
    <location>
        <begin position="1029"/>
        <end position="1039"/>
    </location>
</feature>
<feature type="modified residue" description="Phosphoserine" evidence="13">
    <location>
        <position position="76"/>
    </location>
</feature>
<feature type="modified residue" description="Phosphoserine" evidence="12">
    <location>
        <position position="770"/>
    </location>
</feature>
<feature type="modified residue" description="Phosphoserine" evidence="2">
    <location>
        <position position="1009"/>
    </location>
</feature>
<feature type="modified residue" description="Phosphoserine" evidence="2">
    <location>
        <position position="1011"/>
    </location>
</feature>
<feature type="modified residue" description="Phosphoserine" evidence="2">
    <location>
        <position position="1012"/>
    </location>
</feature>
<feature type="modified residue" description="Phosphoserine" evidence="2">
    <location>
        <position position="1014"/>
    </location>
</feature>
<feature type="modified residue" description="Phosphoserine" evidence="12">
    <location>
        <position position="1020"/>
    </location>
</feature>
<feature type="splice variant" id="VSP_029155" description="In isoform 3." evidence="8">
    <location>
        <begin position="1"/>
        <end position="534"/>
    </location>
</feature>
<feature type="splice variant" id="VSP_029156" description="In isoform 3." evidence="8">
    <original>KGTPEIAFWGS</original>
    <variation>MGSSWCLYGCC</variation>
    <location>
        <begin position="535"/>
        <end position="545"/>
    </location>
</feature>
<feature type="splice variant" id="VSP_023029" description="In isoform 2 and isoform 3." evidence="8 9 10">
    <location>
        <position position="695"/>
    </location>
</feature>
<feature type="sequence variant" id="VAR_036947" description="In dbSNP:rs7016219.">
    <original>T</original>
    <variation>M</variation>
    <location>
        <position position="186"/>
    </location>
</feature>
<feature type="sequence variant" id="VAR_036948" description="In dbSNP:rs7003060.">
    <original>T</original>
    <variation>P</variation>
    <location>
        <position position="186"/>
    </location>
</feature>
<feature type="sequence variant" id="VAR_036949" description="In dbSNP:rs13263453.">
    <original>P</original>
    <variation>L</variation>
    <location>
        <position position="293"/>
    </location>
</feature>
<sequence length="1048" mass="116034">MEGRSAAAETFVWVNNASAHSQSVAKAKYEFLFGRSEGKAPDTSDHGGSTLLPPNVTNEFPEYGTMEEGGEGLRASLEFDGEALPCHPQEQQGVQPLTGCHSGLDSVTEGPKDVREAPSQSHLKEQSLQPIDSLISALKATEARIISGTLQATKVLDQDAVSSFSVQQVEKELDTASRKTQRVNKTLPAGQKNLPEIPLSAEVTTEESFYLSIQKDLTALLTGDTQAEISQIMNNGRKGAVCVQEPSCPLASLGSSAVTCHSAGSVGFLKEQRSALGREHPGGCDRSSSMGRPGRVKHVEFQGVEILWTGGDKRETQHPIDFETSLQRTASPDSKESSKVPRHLISSAGLCNSSSLTENVWDESWKAPSERPGTSSGTFSPVRLDESGEDEVFLQENKQHLEKTPKPERDRERISEQEEHVKGEDEDILGPGYTEDSTDVYSSQFETILDNTSLYYSAESLETLYSEPDSYFSFEMPLTPMIQQRIKEGGQFLERTSGGGHQDILSVSADGGIVMGYSSGVTNGLNDASDSIYTKGTPEIAFWGSNAGVKTTRLEAHSEMGSTEILEKETPENLSNGTSSNVEAAKRLAKRLYQLDRFKRSDVAKHLGKNNEFSKLVAEEYLKFFDFTGMTLDQSLRYFFKAFSLVGETQERERVLIHFSNRYFYCNPDTIASQDGVHCLTCAIMLLNTDLHGHVNIGKKMTCQEFIANLQGVNEGVDFSKDLLKALYNSIKNEKLEWAVDDEEKKKSPSESTEEKANGTHPKTISRIGSTTNPFLDIPHDPNAAVYKSGFLARKIHADMDGKKTPRGKRGWKTFYAVLKGTVLYLQKDEYKPEKALSEEDLKNAVSVHHALASKATDYEKKPNVFKLKTADWRVLLFQTQSPEEMQGWINKINCVAAVFSAPPFPAAIGSQKKFSRPLLPATTTKLSQEEQLKSHESKLKQITTELAEHRSYPPDKKVKAKDVDEYKLKDHYLEFEKTRYEMYVSILKEGGKELLSNDESEAAGLKKSHSSPSLNPDTSPITAKVKRNVSERKDHRPETPSIKQKVT</sequence>
<keyword id="KW-0025">Alternative splicing</keyword>
<keyword id="KW-1003">Cell membrane</keyword>
<keyword id="KW-0966">Cell projection</keyword>
<keyword id="KW-0175">Coiled coil</keyword>
<keyword id="KW-0344">Guanine-nucleotide releasing factor</keyword>
<keyword id="KW-0472">Membrane</keyword>
<keyword id="KW-0597">Phosphoprotein</keyword>
<keyword id="KW-1267">Proteomics identification</keyword>
<keyword id="KW-1185">Reference proteome</keyword>
<keyword id="KW-0770">Synapse</keyword>
<name>PSD3_HUMAN</name>
<protein>
    <recommendedName>
        <fullName>PH and SEC7 domain-containing protein 3</fullName>
    </recommendedName>
    <alternativeName>
        <fullName>Epididymis tissue protein Li 20mP</fullName>
    </alternativeName>
    <alternativeName>
        <fullName>Exchange factor for ADP-ribosylation factor guanine nucleotide factor 6 D</fullName>
        <shortName>Exchange factor for ARF6 D</shortName>
    </alternativeName>
    <alternativeName>
        <fullName>Hepatocellular carcinoma-associated antigen 67</fullName>
    </alternativeName>
    <alternativeName>
        <fullName>Pleckstrin homology and SEC7 domain-containing protein 3</fullName>
    </alternativeName>
</protein>
<reference key="1">
    <citation type="journal article" date="1999" name="DNA Res.">
        <title>Prediction of the coding sequences of unidentified human genes. XIII. The complete sequences of 100 new cDNA clones from brain which code for large proteins in vitro.</title>
        <authorList>
            <person name="Nagase T."/>
            <person name="Ishikawa K."/>
            <person name="Suyama M."/>
            <person name="Kikuno R."/>
            <person name="Hirosawa M."/>
            <person name="Miyajima N."/>
            <person name="Tanaka A."/>
            <person name="Kotani H."/>
            <person name="Nomura N."/>
            <person name="Ohara O."/>
        </authorList>
    </citation>
    <scope>NUCLEOTIDE SEQUENCE [LARGE SCALE MRNA] (ISOFORM 3)</scope>
    <source>
        <tissue>Brain</tissue>
    </source>
</reference>
<reference key="2">
    <citation type="journal article" date="2002" name="DNA Res.">
        <title>Construction of expression-ready cDNA clones for KIAA genes: manual curation of 330 KIAA cDNA clones.</title>
        <authorList>
            <person name="Nakajima D."/>
            <person name="Okazaki N."/>
            <person name="Yamakawa H."/>
            <person name="Kikuno R."/>
            <person name="Ohara O."/>
            <person name="Nagase T."/>
        </authorList>
    </citation>
    <scope>SEQUENCE REVISION</scope>
</reference>
<reference key="3">
    <citation type="journal article" date="2010" name="Mol. Cell. Proteomics">
        <title>Systematic mapping and functional analysis of a family of human epididymal secretory sperm-located proteins.</title>
        <authorList>
            <person name="Li J."/>
            <person name="Liu F."/>
            <person name="Wang H."/>
            <person name="Liu X."/>
            <person name="Liu J."/>
            <person name="Li N."/>
            <person name="Wan F."/>
            <person name="Wang W."/>
            <person name="Zhang C."/>
            <person name="Jin S."/>
            <person name="Liu J."/>
            <person name="Zhu P."/>
            <person name="Liu Y."/>
        </authorList>
    </citation>
    <scope>NUCLEOTIDE SEQUENCE [MRNA] (ISOFORM 2)</scope>
    <scope>TISSUE SPECIFICITY</scope>
    <source>
        <tissue>Epididymis</tissue>
    </source>
</reference>
<reference key="4">
    <citation type="journal article" date="2006" name="Nature">
        <title>DNA sequence and analysis of human chromosome 8.</title>
        <authorList>
            <person name="Nusbaum C."/>
            <person name="Mikkelsen T.S."/>
            <person name="Zody M.C."/>
            <person name="Asakawa S."/>
            <person name="Taudien S."/>
            <person name="Garber M."/>
            <person name="Kodira C.D."/>
            <person name="Schueler M.G."/>
            <person name="Shimizu A."/>
            <person name="Whittaker C.A."/>
            <person name="Chang J.L."/>
            <person name="Cuomo C.A."/>
            <person name="Dewar K."/>
            <person name="FitzGerald M.G."/>
            <person name="Yang X."/>
            <person name="Allen N.R."/>
            <person name="Anderson S."/>
            <person name="Asakawa T."/>
            <person name="Blechschmidt K."/>
            <person name="Bloom T."/>
            <person name="Borowsky M.L."/>
            <person name="Butler J."/>
            <person name="Cook A."/>
            <person name="Corum B."/>
            <person name="DeArellano K."/>
            <person name="DeCaprio D."/>
            <person name="Dooley K.T."/>
            <person name="Dorris L. III"/>
            <person name="Engels R."/>
            <person name="Gloeckner G."/>
            <person name="Hafez N."/>
            <person name="Hagopian D.S."/>
            <person name="Hall J.L."/>
            <person name="Ishikawa S.K."/>
            <person name="Jaffe D.B."/>
            <person name="Kamat A."/>
            <person name="Kudoh J."/>
            <person name="Lehmann R."/>
            <person name="Lokitsang T."/>
            <person name="Macdonald P."/>
            <person name="Major J.E."/>
            <person name="Matthews C.D."/>
            <person name="Mauceli E."/>
            <person name="Menzel U."/>
            <person name="Mihalev A.H."/>
            <person name="Minoshima S."/>
            <person name="Murayama Y."/>
            <person name="Naylor J.W."/>
            <person name="Nicol R."/>
            <person name="Nguyen C."/>
            <person name="O'Leary S.B."/>
            <person name="O'Neill K."/>
            <person name="Parker S.C.J."/>
            <person name="Polley A."/>
            <person name="Raymond C.K."/>
            <person name="Reichwald K."/>
            <person name="Rodriguez J."/>
            <person name="Sasaki T."/>
            <person name="Schilhabel M."/>
            <person name="Siddiqui R."/>
            <person name="Smith C.L."/>
            <person name="Sneddon T.P."/>
            <person name="Talamas J.A."/>
            <person name="Tenzin P."/>
            <person name="Topham K."/>
            <person name="Venkataraman V."/>
            <person name="Wen G."/>
            <person name="Yamazaki S."/>
            <person name="Young S.K."/>
            <person name="Zeng Q."/>
            <person name="Zimmer A.R."/>
            <person name="Rosenthal A."/>
            <person name="Birren B.W."/>
            <person name="Platzer M."/>
            <person name="Shimizu N."/>
            <person name="Lander E.S."/>
        </authorList>
    </citation>
    <scope>NUCLEOTIDE SEQUENCE [LARGE SCALE GENOMIC DNA]</scope>
</reference>
<reference key="5">
    <citation type="journal article" date="2002" name="J. Immunol.">
        <title>Large scale identification of human hepatocellular carcinoma-associated antigens by autoantibodies.</title>
        <authorList>
            <person name="Wang Y."/>
            <person name="Han K.-J."/>
            <person name="Pang X.-W."/>
            <person name="Vaughan H.A."/>
            <person name="Qu W."/>
            <person name="Dong X.-Y."/>
            <person name="Peng J.-R."/>
            <person name="Zhao H.-T."/>
            <person name="Rui J.-A."/>
            <person name="Leng X.-S."/>
            <person name="Cebon J."/>
            <person name="Burgess A.W."/>
            <person name="Chen W.-F."/>
        </authorList>
    </citation>
    <scope>NUCLEOTIDE SEQUENCE [MRNA] OF 500-1048 (ISOFORM 1)</scope>
    <source>
        <tissue>Hepatoma</tissue>
    </source>
</reference>
<reference key="6">
    <citation type="submission" date="2002-06" db="EMBL/GenBank/DDBJ databases">
        <title>Cloning and expression of EFA6R, an exchange factor of ARF6 homolog.</title>
        <authorList>
            <person name="Hong W."/>
            <person name="Tham J.M."/>
            <person name="Li H."/>
        </authorList>
    </citation>
    <scope>NUCLEOTIDE SEQUENCE [MRNA] OF 500-1048 (ISOFORM 1)</scope>
</reference>
<reference key="7">
    <citation type="journal article" date="2004" name="Genome Res.">
        <title>The status, quality, and expansion of the NIH full-length cDNA project: the Mammalian Gene Collection (MGC).</title>
        <authorList>
            <consortium name="The MGC Project Team"/>
        </authorList>
    </citation>
    <scope>NUCLEOTIDE SEQUENCE [LARGE SCALE MRNA] OF 506-1048 (ISOFORMS 1 AND 2)</scope>
    <source>
        <tissue>Brain</tissue>
    </source>
</reference>
<reference key="8">
    <citation type="journal article" date="2008" name="Proc. Natl. Acad. Sci. U.S.A.">
        <title>A quantitative atlas of mitotic phosphorylation.</title>
        <authorList>
            <person name="Dephoure N."/>
            <person name="Zhou C."/>
            <person name="Villen J."/>
            <person name="Beausoleil S.A."/>
            <person name="Bakalarski C.E."/>
            <person name="Elledge S.J."/>
            <person name="Gygi S.P."/>
        </authorList>
    </citation>
    <scope>PHOSPHORYLATION [LARGE SCALE ANALYSIS] AT SER-770 AND SER-1020</scope>
    <scope>IDENTIFICATION BY MASS SPECTROMETRY [LARGE SCALE ANALYSIS]</scope>
    <source>
        <tissue>Cervix carcinoma</tissue>
    </source>
</reference>
<reference key="9">
    <citation type="journal article" date="2014" name="J. Proteomics">
        <title>An enzyme assisted RP-RPLC approach for in-depth analysis of human liver phosphoproteome.</title>
        <authorList>
            <person name="Bian Y."/>
            <person name="Song C."/>
            <person name="Cheng K."/>
            <person name="Dong M."/>
            <person name="Wang F."/>
            <person name="Huang J."/>
            <person name="Sun D."/>
            <person name="Wang L."/>
            <person name="Ye M."/>
            <person name="Zou H."/>
        </authorList>
    </citation>
    <scope>PHOSPHORYLATION [LARGE SCALE ANALYSIS] AT SER-76</scope>
    <scope>IDENTIFICATION BY MASS SPECTROMETRY [LARGE SCALE ANALYSIS]</scope>
    <source>
        <tissue>Liver</tissue>
    </source>
</reference>
<gene>
    <name type="primary">PSD3</name>
    <name type="synonym">EFA6D</name>
    <name type="synonym">EFA6R</name>
    <name type="synonym">HCA67</name>
    <name type="synonym">KIAA0942</name>
</gene>
<dbReference type="EMBL" id="AB023159">
    <property type="protein sequence ID" value="BAA76786.2"/>
    <property type="status" value="ALT_INIT"/>
    <property type="molecule type" value="mRNA"/>
</dbReference>
<dbReference type="EMBL" id="GU727648">
    <property type="protein sequence ID" value="ADU87649.1"/>
    <property type="molecule type" value="mRNA"/>
</dbReference>
<dbReference type="EMBL" id="AC009884">
    <property type="status" value="NOT_ANNOTATED_CDS"/>
    <property type="molecule type" value="Genomic_DNA"/>
</dbReference>
<dbReference type="EMBL" id="AC087821">
    <property type="status" value="NOT_ANNOTATED_CDS"/>
    <property type="molecule type" value="Genomic_DNA"/>
</dbReference>
<dbReference type="EMBL" id="AC090420">
    <property type="status" value="NOT_ANNOTATED_CDS"/>
    <property type="molecule type" value="Genomic_DNA"/>
</dbReference>
<dbReference type="EMBL" id="AC100800">
    <property type="status" value="NOT_ANNOTATED_CDS"/>
    <property type="molecule type" value="Genomic_DNA"/>
</dbReference>
<dbReference type="EMBL" id="AC120051">
    <property type="status" value="NOT_ANNOTATED_CDS"/>
    <property type="molecule type" value="Genomic_DNA"/>
</dbReference>
<dbReference type="EMBL" id="AF519767">
    <property type="protein sequence ID" value="AAM74203.1"/>
    <property type="molecule type" value="mRNA"/>
</dbReference>
<dbReference type="EMBL" id="AF243495">
    <property type="protein sequence ID" value="AAF61269.2"/>
    <property type="status" value="ALT_INIT"/>
    <property type="molecule type" value="mRNA"/>
</dbReference>
<dbReference type="EMBL" id="BC075044">
    <property type="protein sequence ID" value="AAH75044.1"/>
    <property type="status" value="ALT_INIT"/>
    <property type="molecule type" value="mRNA"/>
</dbReference>
<dbReference type="EMBL" id="BC075045">
    <property type="protein sequence ID" value="AAH75045.1"/>
    <property type="status" value="ALT_INIT"/>
    <property type="molecule type" value="mRNA"/>
</dbReference>
<dbReference type="CCDS" id="CCDS34854.1">
    <molecule id="Q9NYI0-3"/>
</dbReference>
<dbReference type="CCDS" id="CCDS43720.1">
    <molecule id="Q9NYI0-2"/>
</dbReference>
<dbReference type="RefSeq" id="NP_056125.3">
    <molecule id="Q9NYI0-2"/>
    <property type="nucleotide sequence ID" value="NM_015310.3"/>
</dbReference>
<dbReference type="RefSeq" id="NP_996792.1">
    <molecule id="Q9NYI0-3"/>
    <property type="nucleotide sequence ID" value="NM_206909.3"/>
</dbReference>
<dbReference type="SMR" id="Q9NYI0"/>
<dbReference type="BioGRID" id="116943">
    <property type="interactions" value="69"/>
</dbReference>
<dbReference type="FunCoup" id="Q9NYI0">
    <property type="interactions" value="549"/>
</dbReference>
<dbReference type="IntAct" id="Q9NYI0">
    <property type="interactions" value="44"/>
</dbReference>
<dbReference type="MINT" id="Q9NYI0"/>
<dbReference type="STRING" id="9606.ENSP00000324127"/>
<dbReference type="GlyGen" id="Q9NYI0">
    <property type="glycosylation" value="1 site, 1 N-linked glycan (1 site)"/>
</dbReference>
<dbReference type="iPTMnet" id="Q9NYI0"/>
<dbReference type="PhosphoSitePlus" id="Q9NYI0"/>
<dbReference type="SwissPalm" id="Q9NYI0"/>
<dbReference type="BioMuta" id="PSD3"/>
<dbReference type="DMDM" id="160332377"/>
<dbReference type="jPOST" id="Q9NYI0"/>
<dbReference type="MassIVE" id="Q9NYI0"/>
<dbReference type="PaxDb" id="9606-ENSP00000324127"/>
<dbReference type="PeptideAtlas" id="Q9NYI0"/>
<dbReference type="ProteomicsDB" id="83232">
    <molecule id="Q9NYI0-1"/>
</dbReference>
<dbReference type="ProteomicsDB" id="83233">
    <molecule id="Q9NYI0-2"/>
</dbReference>
<dbReference type="ProteomicsDB" id="83234">
    <molecule id="Q9NYI0-3"/>
</dbReference>
<dbReference type="Pumba" id="Q9NYI0"/>
<dbReference type="Antibodypedia" id="9043">
    <property type="antibodies" value="153 antibodies from 23 providers"/>
</dbReference>
<dbReference type="DNASU" id="23362"/>
<dbReference type="Ensembl" id="ENST00000286485.12">
    <molecule id="Q9NYI0-3"/>
    <property type="protein sequence ID" value="ENSP00000286485.8"/>
    <property type="gene ID" value="ENSG00000156011.19"/>
</dbReference>
<dbReference type="Ensembl" id="ENST00000327040.13">
    <molecule id="Q9NYI0-2"/>
    <property type="protein sequence ID" value="ENSP00000324127.8"/>
    <property type="gene ID" value="ENSG00000156011.19"/>
</dbReference>
<dbReference type="GeneID" id="23362"/>
<dbReference type="KEGG" id="hsa:23362"/>
<dbReference type="MANE-Select" id="ENST00000327040.13">
    <molecule id="Q9NYI0-2"/>
    <property type="protein sequence ID" value="ENSP00000324127.8"/>
    <property type="RefSeq nucleotide sequence ID" value="NM_015310.4"/>
    <property type="RefSeq protein sequence ID" value="NP_056125.3"/>
</dbReference>
<dbReference type="UCSC" id="uc003wyy.4">
    <molecule id="Q9NYI0-1"/>
    <property type="organism name" value="human"/>
</dbReference>
<dbReference type="AGR" id="HGNC:19093"/>
<dbReference type="CTD" id="23362"/>
<dbReference type="DisGeNET" id="23362"/>
<dbReference type="GeneCards" id="PSD3"/>
<dbReference type="HGNC" id="HGNC:19093">
    <property type="gene designation" value="PSD3"/>
</dbReference>
<dbReference type="HPA" id="ENSG00000156011">
    <property type="expression patterns" value="Tissue enhanced (brain)"/>
</dbReference>
<dbReference type="MIM" id="614440">
    <property type="type" value="gene"/>
</dbReference>
<dbReference type="neXtProt" id="NX_Q9NYI0"/>
<dbReference type="OpenTargets" id="ENSG00000156011"/>
<dbReference type="PharmGKB" id="PA128394629"/>
<dbReference type="VEuPathDB" id="HostDB:ENSG00000156011"/>
<dbReference type="eggNOG" id="KOG0932">
    <property type="taxonomic scope" value="Eukaryota"/>
</dbReference>
<dbReference type="GeneTree" id="ENSGT00940000156591"/>
<dbReference type="HOGENOM" id="CLU_011021_1_1_1"/>
<dbReference type="InParanoid" id="Q9NYI0"/>
<dbReference type="OrthoDB" id="2157641at2759"/>
<dbReference type="PAN-GO" id="Q9NYI0">
    <property type="GO annotations" value="1 GO annotation based on evolutionary models"/>
</dbReference>
<dbReference type="PhylomeDB" id="Q9NYI0"/>
<dbReference type="TreeFam" id="TF319755"/>
<dbReference type="PathwayCommons" id="Q9NYI0"/>
<dbReference type="SignaLink" id="Q9NYI0"/>
<dbReference type="BioGRID-ORCS" id="23362">
    <property type="hits" value="14 hits in 1144 CRISPR screens"/>
</dbReference>
<dbReference type="CD-CODE" id="DEE660B4">
    <property type="entry name" value="Stress granule"/>
</dbReference>
<dbReference type="CD-CODE" id="FB4E32DD">
    <property type="entry name" value="Presynaptic clusters and postsynaptic densities"/>
</dbReference>
<dbReference type="ChiTaRS" id="PSD3">
    <property type="organism name" value="human"/>
</dbReference>
<dbReference type="GenomeRNAi" id="23362"/>
<dbReference type="Pharos" id="Q9NYI0">
    <property type="development level" value="Tbio"/>
</dbReference>
<dbReference type="PRO" id="PR:Q9NYI0"/>
<dbReference type="Proteomes" id="UP000005640">
    <property type="component" value="Chromosome 8"/>
</dbReference>
<dbReference type="RNAct" id="Q9NYI0">
    <property type="molecule type" value="protein"/>
</dbReference>
<dbReference type="Bgee" id="ENSG00000156011">
    <property type="expression patterns" value="Expressed in Brodmann (1909) area 23 and 201 other cell types or tissues"/>
</dbReference>
<dbReference type="ExpressionAtlas" id="Q9NYI0">
    <property type="expression patterns" value="baseline and differential"/>
</dbReference>
<dbReference type="GO" id="GO:0014069">
    <property type="term" value="C:postsynaptic density"/>
    <property type="evidence" value="ECO:0007669"/>
    <property type="project" value="UniProtKB-SubCell"/>
</dbReference>
<dbReference type="GO" id="GO:0032587">
    <property type="term" value="C:ruffle membrane"/>
    <property type="evidence" value="ECO:0000250"/>
    <property type="project" value="UniProtKB"/>
</dbReference>
<dbReference type="GO" id="GO:0005085">
    <property type="term" value="F:guanyl-nucleotide exchange factor activity"/>
    <property type="evidence" value="ECO:0007669"/>
    <property type="project" value="UniProtKB-KW"/>
</dbReference>
<dbReference type="GO" id="GO:0032012">
    <property type="term" value="P:regulation of ARF protein signal transduction"/>
    <property type="evidence" value="ECO:0007669"/>
    <property type="project" value="InterPro"/>
</dbReference>
<dbReference type="CDD" id="cd13295">
    <property type="entry name" value="PH_EFA6"/>
    <property type="match status" value="1"/>
</dbReference>
<dbReference type="CDD" id="cd00171">
    <property type="entry name" value="Sec7"/>
    <property type="match status" value="1"/>
</dbReference>
<dbReference type="FunFam" id="1.10.1000.11:FF:000004">
    <property type="entry name" value="PH and SEC7 domain-containing protein 2"/>
    <property type="match status" value="1"/>
</dbReference>
<dbReference type="FunFam" id="2.30.29.30:FF:000054">
    <property type="entry name" value="PH and SEC7 domain-containing protein 3"/>
    <property type="match status" value="1"/>
</dbReference>
<dbReference type="Gene3D" id="1.10.1000.11">
    <property type="entry name" value="Arf Nucleotide-binding Site Opener,domain 2"/>
    <property type="match status" value="1"/>
</dbReference>
<dbReference type="Gene3D" id="2.30.29.30">
    <property type="entry name" value="Pleckstrin-homology domain (PH domain)/Phosphotyrosine-binding domain (PTB)"/>
    <property type="match status" value="1"/>
</dbReference>
<dbReference type="InterPro" id="IPR011993">
    <property type="entry name" value="PH-like_dom_sf"/>
</dbReference>
<dbReference type="InterPro" id="IPR041681">
    <property type="entry name" value="PH_9"/>
</dbReference>
<dbReference type="InterPro" id="IPR001849">
    <property type="entry name" value="PH_domain"/>
</dbReference>
<dbReference type="InterPro" id="IPR023394">
    <property type="entry name" value="Sec7_C_sf"/>
</dbReference>
<dbReference type="InterPro" id="IPR000904">
    <property type="entry name" value="Sec7_dom"/>
</dbReference>
<dbReference type="InterPro" id="IPR035999">
    <property type="entry name" value="Sec7_dom_sf"/>
</dbReference>
<dbReference type="PANTHER" id="PTHR10663">
    <property type="entry name" value="GUANYL-NUCLEOTIDE EXCHANGE FACTOR"/>
    <property type="match status" value="1"/>
</dbReference>
<dbReference type="PANTHER" id="PTHR10663:SF337">
    <property type="entry name" value="PH AND SEC7 DOMAIN-CONTAINING PROTEIN 3"/>
    <property type="match status" value="1"/>
</dbReference>
<dbReference type="Pfam" id="PF15410">
    <property type="entry name" value="PH_9"/>
    <property type="match status" value="1"/>
</dbReference>
<dbReference type="Pfam" id="PF01369">
    <property type="entry name" value="Sec7"/>
    <property type="match status" value="1"/>
</dbReference>
<dbReference type="SMART" id="SM00233">
    <property type="entry name" value="PH"/>
    <property type="match status" value="1"/>
</dbReference>
<dbReference type="SMART" id="SM00222">
    <property type="entry name" value="Sec7"/>
    <property type="match status" value="1"/>
</dbReference>
<dbReference type="SUPFAM" id="SSF50729">
    <property type="entry name" value="PH domain-like"/>
    <property type="match status" value="1"/>
</dbReference>
<dbReference type="SUPFAM" id="SSF48425">
    <property type="entry name" value="Sec7 domain"/>
    <property type="match status" value="1"/>
</dbReference>
<dbReference type="PROSITE" id="PS50003">
    <property type="entry name" value="PH_DOMAIN"/>
    <property type="match status" value="1"/>
</dbReference>
<dbReference type="PROSITE" id="PS50190">
    <property type="entry name" value="SEC7"/>
    <property type="match status" value="1"/>
</dbReference>
<accession>Q9NYI0</accession>
<accession>A6NFQ4</accession>
<accession>E9KL50</accession>
<accession>Q6B003</accession>
<accession>Q9Y2F1</accession>
<evidence type="ECO:0000250" key="1"/>
<evidence type="ECO:0000250" key="2">
    <source>
        <dbReference type="UniProtKB" id="Q2PFD7"/>
    </source>
</evidence>
<evidence type="ECO:0000255" key="3"/>
<evidence type="ECO:0000255" key="4">
    <source>
        <dbReference type="PROSITE-ProRule" id="PRU00145"/>
    </source>
</evidence>
<evidence type="ECO:0000255" key="5">
    <source>
        <dbReference type="PROSITE-ProRule" id="PRU00189"/>
    </source>
</evidence>
<evidence type="ECO:0000256" key="6">
    <source>
        <dbReference type="SAM" id="MobiDB-lite"/>
    </source>
</evidence>
<evidence type="ECO:0000269" key="7">
    <source>
    </source>
</evidence>
<evidence type="ECO:0000303" key="8">
    <source>
    </source>
</evidence>
<evidence type="ECO:0000303" key="9">
    <source>
    </source>
</evidence>
<evidence type="ECO:0000303" key="10">
    <source>
    </source>
</evidence>
<evidence type="ECO:0000305" key="11"/>
<evidence type="ECO:0007744" key="12">
    <source>
    </source>
</evidence>
<evidence type="ECO:0007744" key="13">
    <source>
    </source>
</evidence>
<organism>
    <name type="scientific">Homo sapiens</name>
    <name type="common">Human</name>
    <dbReference type="NCBI Taxonomy" id="9606"/>
    <lineage>
        <taxon>Eukaryota</taxon>
        <taxon>Metazoa</taxon>
        <taxon>Chordata</taxon>
        <taxon>Craniata</taxon>
        <taxon>Vertebrata</taxon>
        <taxon>Euteleostomi</taxon>
        <taxon>Mammalia</taxon>
        <taxon>Eutheria</taxon>
        <taxon>Euarchontoglires</taxon>
        <taxon>Primates</taxon>
        <taxon>Haplorrhini</taxon>
        <taxon>Catarrhini</taxon>
        <taxon>Hominidae</taxon>
        <taxon>Homo</taxon>
    </lineage>
</organism>